<gene>
    <name evidence="1" type="primary">murD</name>
    <name type="ordered locus">RPB_1992</name>
</gene>
<reference key="1">
    <citation type="submission" date="2006-01" db="EMBL/GenBank/DDBJ databases">
        <title>Complete sequence of Rhodopseudomonas palustris HaA2.</title>
        <authorList>
            <consortium name="US DOE Joint Genome Institute"/>
            <person name="Copeland A."/>
            <person name="Lucas S."/>
            <person name="Lapidus A."/>
            <person name="Barry K."/>
            <person name="Detter J.C."/>
            <person name="Glavina T."/>
            <person name="Hammon N."/>
            <person name="Israni S."/>
            <person name="Pitluck S."/>
            <person name="Chain P."/>
            <person name="Malfatti S."/>
            <person name="Shin M."/>
            <person name="Vergez L."/>
            <person name="Schmutz J."/>
            <person name="Larimer F."/>
            <person name="Land M."/>
            <person name="Hauser L."/>
            <person name="Pelletier D.A."/>
            <person name="Kyrpides N."/>
            <person name="Anderson I."/>
            <person name="Oda Y."/>
            <person name="Harwood C.S."/>
            <person name="Richardson P."/>
        </authorList>
    </citation>
    <scope>NUCLEOTIDE SEQUENCE [LARGE SCALE GENOMIC DNA]</scope>
    <source>
        <strain>HaA2</strain>
    </source>
</reference>
<name>MURD_RHOP2</name>
<sequence length="466" mass="48873">MIPVTSFAGQSVAVFGLGGSGLASCHALRAGGAEVIACDDNLDRMVEAAQANFITADLRNLPWMNFAALVLTPGVPLTHPTPHWSVLKAREAGVEVIGDVELFCRERRLHAPNAPFVAITGTNGKSTTTALIAHLMRQAGYDTQMGGNIGTAILSLEPPRAGRVHVIEMSSYQIDLTPSLDPSVGILLNVTEDHIDRHGTIEHYAAVKERLVAGVQDGGTAIIGVDDGFGRDAADRLERAGKRVVRISVKQPLASGITADRETIVQADGGASHEVAKLDGIGSLRGLHNAQNAAAAAAAALALGVGPDVLQNGLRSFPGLAHRMEQVGRQGTTLFVNDSKGTNADATAKALSSFGEIFWIAGGKPKTGGIDSLAEYFPRIRKAYLIGEAAQEFAATLEGRVPYEISVTLDNAVPAAARDAASSGLPEPVVLLSPACASFDQFRNFEIRGTKFRDLVTALDGVKPVA</sequence>
<keyword id="KW-0067">ATP-binding</keyword>
<keyword id="KW-0131">Cell cycle</keyword>
<keyword id="KW-0132">Cell division</keyword>
<keyword id="KW-0133">Cell shape</keyword>
<keyword id="KW-0961">Cell wall biogenesis/degradation</keyword>
<keyword id="KW-0963">Cytoplasm</keyword>
<keyword id="KW-0436">Ligase</keyword>
<keyword id="KW-0547">Nucleotide-binding</keyword>
<keyword id="KW-0573">Peptidoglycan synthesis</keyword>
<keyword id="KW-1185">Reference proteome</keyword>
<accession>Q2IYL0</accession>
<organism>
    <name type="scientific">Rhodopseudomonas palustris (strain HaA2)</name>
    <dbReference type="NCBI Taxonomy" id="316058"/>
    <lineage>
        <taxon>Bacteria</taxon>
        <taxon>Pseudomonadati</taxon>
        <taxon>Pseudomonadota</taxon>
        <taxon>Alphaproteobacteria</taxon>
        <taxon>Hyphomicrobiales</taxon>
        <taxon>Nitrobacteraceae</taxon>
        <taxon>Rhodopseudomonas</taxon>
    </lineage>
</organism>
<evidence type="ECO:0000255" key="1">
    <source>
        <dbReference type="HAMAP-Rule" id="MF_00639"/>
    </source>
</evidence>
<protein>
    <recommendedName>
        <fullName evidence="1">UDP-N-acetylmuramoylalanine--D-glutamate ligase</fullName>
        <ecNumber evidence="1">6.3.2.9</ecNumber>
    </recommendedName>
    <alternativeName>
        <fullName evidence="1">D-glutamic acid-adding enzyme</fullName>
    </alternativeName>
    <alternativeName>
        <fullName evidence="1">UDP-N-acetylmuramoyl-L-alanyl-D-glutamate synthetase</fullName>
    </alternativeName>
</protein>
<proteinExistence type="inferred from homology"/>
<comment type="function">
    <text evidence="1">Cell wall formation. Catalyzes the addition of glutamate to the nucleotide precursor UDP-N-acetylmuramoyl-L-alanine (UMA).</text>
</comment>
<comment type="catalytic activity">
    <reaction evidence="1">
        <text>UDP-N-acetyl-alpha-D-muramoyl-L-alanine + D-glutamate + ATP = UDP-N-acetyl-alpha-D-muramoyl-L-alanyl-D-glutamate + ADP + phosphate + H(+)</text>
        <dbReference type="Rhea" id="RHEA:16429"/>
        <dbReference type="ChEBI" id="CHEBI:15378"/>
        <dbReference type="ChEBI" id="CHEBI:29986"/>
        <dbReference type="ChEBI" id="CHEBI:30616"/>
        <dbReference type="ChEBI" id="CHEBI:43474"/>
        <dbReference type="ChEBI" id="CHEBI:83898"/>
        <dbReference type="ChEBI" id="CHEBI:83900"/>
        <dbReference type="ChEBI" id="CHEBI:456216"/>
        <dbReference type="EC" id="6.3.2.9"/>
    </reaction>
</comment>
<comment type="pathway">
    <text evidence="1">Cell wall biogenesis; peptidoglycan biosynthesis.</text>
</comment>
<comment type="subcellular location">
    <subcellularLocation>
        <location evidence="1">Cytoplasm</location>
    </subcellularLocation>
</comment>
<comment type="similarity">
    <text evidence="1">Belongs to the MurCDEF family.</text>
</comment>
<dbReference type="EC" id="6.3.2.9" evidence="1"/>
<dbReference type="EMBL" id="CP000250">
    <property type="protein sequence ID" value="ABD06700.1"/>
    <property type="molecule type" value="Genomic_DNA"/>
</dbReference>
<dbReference type="RefSeq" id="WP_011440888.1">
    <property type="nucleotide sequence ID" value="NC_007778.1"/>
</dbReference>
<dbReference type="SMR" id="Q2IYL0"/>
<dbReference type="STRING" id="316058.RPB_1992"/>
<dbReference type="KEGG" id="rpb:RPB_1992"/>
<dbReference type="eggNOG" id="COG0771">
    <property type="taxonomic scope" value="Bacteria"/>
</dbReference>
<dbReference type="HOGENOM" id="CLU_032540_3_0_5"/>
<dbReference type="OrthoDB" id="9809796at2"/>
<dbReference type="UniPathway" id="UPA00219"/>
<dbReference type="Proteomes" id="UP000008809">
    <property type="component" value="Chromosome"/>
</dbReference>
<dbReference type="GO" id="GO:0005737">
    <property type="term" value="C:cytoplasm"/>
    <property type="evidence" value="ECO:0007669"/>
    <property type="project" value="UniProtKB-SubCell"/>
</dbReference>
<dbReference type="GO" id="GO:0005524">
    <property type="term" value="F:ATP binding"/>
    <property type="evidence" value="ECO:0007669"/>
    <property type="project" value="UniProtKB-UniRule"/>
</dbReference>
<dbReference type="GO" id="GO:0004326">
    <property type="term" value="F:tetrahydrofolylpolyglutamate synthase activity"/>
    <property type="evidence" value="ECO:0007669"/>
    <property type="project" value="InterPro"/>
</dbReference>
<dbReference type="GO" id="GO:0008764">
    <property type="term" value="F:UDP-N-acetylmuramoylalanine-D-glutamate ligase activity"/>
    <property type="evidence" value="ECO:0007669"/>
    <property type="project" value="UniProtKB-UniRule"/>
</dbReference>
<dbReference type="GO" id="GO:0051301">
    <property type="term" value="P:cell division"/>
    <property type="evidence" value="ECO:0007669"/>
    <property type="project" value="UniProtKB-KW"/>
</dbReference>
<dbReference type="GO" id="GO:0071555">
    <property type="term" value="P:cell wall organization"/>
    <property type="evidence" value="ECO:0007669"/>
    <property type="project" value="UniProtKB-KW"/>
</dbReference>
<dbReference type="GO" id="GO:0009252">
    <property type="term" value="P:peptidoglycan biosynthetic process"/>
    <property type="evidence" value="ECO:0007669"/>
    <property type="project" value="UniProtKB-UniRule"/>
</dbReference>
<dbReference type="GO" id="GO:0008360">
    <property type="term" value="P:regulation of cell shape"/>
    <property type="evidence" value="ECO:0007669"/>
    <property type="project" value="UniProtKB-KW"/>
</dbReference>
<dbReference type="Gene3D" id="3.90.190.20">
    <property type="entry name" value="Mur ligase, C-terminal domain"/>
    <property type="match status" value="1"/>
</dbReference>
<dbReference type="Gene3D" id="3.40.1190.10">
    <property type="entry name" value="Mur-like, catalytic domain"/>
    <property type="match status" value="1"/>
</dbReference>
<dbReference type="Gene3D" id="3.40.50.720">
    <property type="entry name" value="NAD(P)-binding Rossmann-like Domain"/>
    <property type="match status" value="1"/>
</dbReference>
<dbReference type="HAMAP" id="MF_00639">
    <property type="entry name" value="MurD"/>
    <property type="match status" value="1"/>
</dbReference>
<dbReference type="InterPro" id="IPR018109">
    <property type="entry name" value="Folylpolyglutamate_synth_CS"/>
</dbReference>
<dbReference type="InterPro" id="IPR036565">
    <property type="entry name" value="Mur-like_cat_sf"/>
</dbReference>
<dbReference type="InterPro" id="IPR004101">
    <property type="entry name" value="Mur_ligase_C"/>
</dbReference>
<dbReference type="InterPro" id="IPR036615">
    <property type="entry name" value="Mur_ligase_C_dom_sf"/>
</dbReference>
<dbReference type="InterPro" id="IPR013221">
    <property type="entry name" value="Mur_ligase_cen"/>
</dbReference>
<dbReference type="InterPro" id="IPR005762">
    <property type="entry name" value="MurD"/>
</dbReference>
<dbReference type="NCBIfam" id="TIGR01087">
    <property type="entry name" value="murD"/>
    <property type="match status" value="1"/>
</dbReference>
<dbReference type="PANTHER" id="PTHR43692">
    <property type="entry name" value="UDP-N-ACETYLMURAMOYLALANINE--D-GLUTAMATE LIGASE"/>
    <property type="match status" value="1"/>
</dbReference>
<dbReference type="PANTHER" id="PTHR43692:SF1">
    <property type="entry name" value="UDP-N-ACETYLMURAMOYLALANINE--D-GLUTAMATE LIGASE"/>
    <property type="match status" value="1"/>
</dbReference>
<dbReference type="Pfam" id="PF02875">
    <property type="entry name" value="Mur_ligase_C"/>
    <property type="match status" value="1"/>
</dbReference>
<dbReference type="Pfam" id="PF08245">
    <property type="entry name" value="Mur_ligase_M"/>
    <property type="match status" value="1"/>
</dbReference>
<dbReference type="SUPFAM" id="SSF51984">
    <property type="entry name" value="MurCD N-terminal domain"/>
    <property type="match status" value="1"/>
</dbReference>
<dbReference type="SUPFAM" id="SSF53623">
    <property type="entry name" value="MurD-like peptide ligases, catalytic domain"/>
    <property type="match status" value="1"/>
</dbReference>
<dbReference type="SUPFAM" id="SSF53244">
    <property type="entry name" value="MurD-like peptide ligases, peptide-binding domain"/>
    <property type="match status" value="1"/>
</dbReference>
<feature type="chain" id="PRO_0000257229" description="UDP-N-acetylmuramoylalanine--D-glutamate ligase">
    <location>
        <begin position="1"/>
        <end position="466"/>
    </location>
</feature>
<feature type="binding site" evidence="1">
    <location>
        <begin position="121"/>
        <end position="127"/>
    </location>
    <ligand>
        <name>ATP</name>
        <dbReference type="ChEBI" id="CHEBI:30616"/>
    </ligand>
</feature>